<keyword id="KW-0963">Cytoplasm</keyword>
<keyword id="KW-0694">RNA-binding</keyword>
<name>SSRP_BARHE</name>
<organism>
    <name type="scientific">Bartonella henselae (strain ATCC 49882 / DSM 28221 / CCUG 30454 / Houston 1)</name>
    <name type="common">Rochalimaea henselae</name>
    <dbReference type="NCBI Taxonomy" id="283166"/>
    <lineage>
        <taxon>Bacteria</taxon>
        <taxon>Pseudomonadati</taxon>
        <taxon>Pseudomonadota</taxon>
        <taxon>Alphaproteobacteria</taxon>
        <taxon>Hyphomicrobiales</taxon>
        <taxon>Bartonellaceae</taxon>
        <taxon>Bartonella</taxon>
    </lineage>
</organism>
<sequence length="158" mass="18590">MNKKKNAPVRKIIADNRKARFNYEILDNLEAGLVLQGAEVKSLRSNHANIAESYASFENGELWLVNSYIPEYTQANRFNHEPRRLRKLLISKREMARFFNATSREGMTLVPLKLYFNERGRAKLEIALARGKKLHDKRETEKKRDWGREKARLLKRYG</sequence>
<comment type="function">
    <text evidence="1">Required for rescue of stalled ribosomes mediated by trans-translation. Binds to transfer-messenger RNA (tmRNA), required for stable association of tmRNA with ribosomes. tmRNA and SmpB together mimic tRNA shape, replacing the anticodon stem-loop with SmpB. tmRNA is encoded by the ssrA gene; the 2 termini fold to resemble tRNA(Ala) and it encodes a 'tag peptide', a short internal open reading frame. During trans-translation Ala-aminoacylated tmRNA acts like a tRNA, entering the A-site of stalled ribosomes, displacing the stalled mRNA. The ribosome then switches to translate the ORF on the tmRNA; the nascent peptide is terminated with the 'tag peptide' encoded by the tmRNA and targeted for degradation. The ribosome is freed to recommence translation, which seems to be the essential function of trans-translation.</text>
</comment>
<comment type="subcellular location">
    <subcellularLocation>
        <location evidence="1">Cytoplasm</location>
    </subcellularLocation>
    <text evidence="1">The tmRNA-SmpB complex associates with stalled 70S ribosomes.</text>
</comment>
<comment type="similarity">
    <text evidence="1">Belongs to the SmpB family.</text>
</comment>
<accession>Q6G467</accession>
<dbReference type="EMBL" id="BX897699">
    <property type="protein sequence ID" value="CAF27309.1"/>
    <property type="molecule type" value="Genomic_DNA"/>
</dbReference>
<dbReference type="RefSeq" id="WP_011180432.1">
    <property type="nucleotide sequence ID" value="NZ_LRIJ02000001.1"/>
</dbReference>
<dbReference type="SMR" id="Q6G467"/>
<dbReference type="PaxDb" id="283166-BH05010"/>
<dbReference type="EnsemblBacteria" id="CAF27309">
    <property type="protein sequence ID" value="CAF27309"/>
    <property type="gene ID" value="BH05010"/>
</dbReference>
<dbReference type="GeneID" id="92985158"/>
<dbReference type="KEGG" id="bhe:BH05010"/>
<dbReference type="eggNOG" id="COG0691">
    <property type="taxonomic scope" value="Bacteria"/>
</dbReference>
<dbReference type="OrthoDB" id="9805462at2"/>
<dbReference type="Proteomes" id="UP000000421">
    <property type="component" value="Chromosome"/>
</dbReference>
<dbReference type="GO" id="GO:0005829">
    <property type="term" value="C:cytosol"/>
    <property type="evidence" value="ECO:0007669"/>
    <property type="project" value="TreeGrafter"/>
</dbReference>
<dbReference type="GO" id="GO:0003723">
    <property type="term" value="F:RNA binding"/>
    <property type="evidence" value="ECO:0007669"/>
    <property type="project" value="UniProtKB-UniRule"/>
</dbReference>
<dbReference type="GO" id="GO:0070929">
    <property type="term" value="P:trans-translation"/>
    <property type="evidence" value="ECO:0007669"/>
    <property type="project" value="UniProtKB-UniRule"/>
</dbReference>
<dbReference type="CDD" id="cd09294">
    <property type="entry name" value="SmpB"/>
    <property type="match status" value="1"/>
</dbReference>
<dbReference type="Gene3D" id="2.40.280.10">
    <property type="match status" value="1"/>
</dbReference>
<dbReference type="HAMAP" id="MF_00023">
    <property type="entry name" value="SmpB"/>
    <property type="match status" value="1"/>
</dbReference>
<dbReference type="InterPro" id="IPR023620">
    <property type="entry name" value="SmpB"/>
</dbReference>
<dbReference type="InterPro" id="IPR000037">
    <property type="entry name" value="SsrA-bd_prot"/>
</dbReference>
<dbReference type="InterPro" id="IPR020081">
    <property type="entry name" value="SsrA-bd_prot_CS"/>
</dbReference>
<dbReference type="NCBIfam" id="NF003843">
    <property type="entry name" value="PRK05422.1"/>
    <property type="match status" value="1"/>
</dbReference>
<dbReference type="NCBIfam" id="TIGR00086">
    <property type="entry name" value="smpB"/>
    <property type="match status" value="1"/>
</dbReference>
<dbReference type="PANTHER" id="PTHR30308:SF2">
    <property type="entry name" value="SSRA-BINDING PROTEIN"/>
    <property type="match status" value="1"/>
</dbReference>
<dbReference type="PANTHER" id="PTHR30308">
    <property type="entry name" value="TMRNA-BINDING COMPONENT OF TRANS-TRANSLATION TAGGING COMPLEX"/>
    <property type="match status" value="1"/>
</dbReference>
<dbReference type="Pfam" id="PF01668">
    <property type="entry name" value="SmpB"/>
    <property type="match status" value="1"/>
</dbReference>
<dbReference type="SUPFAM" id="SSF74982">
    <property type="entry name" value="Small protein B (SmpB)"/>
    <property type="match status" value="1"/>
</dbReference>
<dbReference type="PROSITE" id="PS01317">
    <property type="entry name" value="SSRP"/>
    <property type="match status" value="1"/>
</dbReference>
<reference key="1">
    <citation type="journal article" date="2004" name="Proc. Natl. Acad. Sci. U.S.A.">
        <title>The louse-borne human pathogen Bartonella quintana is a genomic derivative of the zoonotic agent Bartonella henselae.</title>
        <authorList>
            <person name="Alsmark U.C.M."/>
            <person name="Frank A.C."/>
            <person name="Karlberg E.O."/>
            <person name="Legault B.-A."/>
            <person name="Ardell D.H."/>
            <person name="Canbaeck B."/>
            <person name="Eriksson A.-S."/>
            <person name="Naeslund A.K."/>
            <person name="Handley S.A."/>
            <person name="Huvet M."/>
            <person name="La Scola B."/>
            <person name="Holmberg M."/>
            <person name="Andersson S.G.E."/>
        </authorList>
    </citation>
    <scope>NUCLEOTIDE SEQUENCE [LARGE SCALE GENOMIC DNA]</scope>
    <source>
        <strain>ATCC 49882 / DSM 28221 / CCUG 30454 / Houston 1</strain>
    </source>
</reference>
<gene>
    <name evidence="1" type="primary">smpB</name>
    <name type="ordered locus">BH05010</name>
</gene>
<proteinExistence type="inferred from homology"/>
<protein>
    <recommendedName>
        <fullName evidence="1">SsrA-binding protein</fullName>
    </recommendedName>
    <alternativeName>
        <fullName evidence="1">Small protein B</fullName>
    </alternativeName>
</protein>
<feature type="chain" id="PRO_0000102908" description="SsrA-binding protein">
    <location>
        <begin position="1"/>
        <end position="158"/>
    </location>
</feature>
<evidence type="ECO:0000255" key="1">
    <source>
        <dbReference type="HAMAP-Rule" id="MF_00023"/>
    </source>
</evidence>